<sequence>MQSCESSGDSADDPLSRGLRRRGQPRVVVIGAGLAGLAAARALLEQGFTDVTVLEASSHIGGRVQSVRLGDTTFELGATWIHGSHGNPIYQLAEANGLLEETTDGERSVGRISLYSKNGVACYLTNRGCRIPKDVVEEFSDLYNEVYNMTQEFFRHGKPVNAESQNSVGVFTREKVRNRIRDDPDDTEATKRLKLAMIQQYLKVESCESSSHSIDEVSLSAFGEWTEIPGAHHIIPSGFMRVVELLAEGIPPHVIQLGKPVRCIHWDQASAHPRGPEIEPRGEGDHNHDTGEGGQSGENPQQGRWDEDEPWPVVVECEDCEVIPADHVIVTVSLGVLKRQYTSFFRPCLPTEKVAAIHRLGIGTTDKIFLEFEEPFWGPECNSLQFVWEDEAESCTLTYPPELWYRKICGFDVLYPPERYGHVLSGWICGEEALVMERCDDEAVAEICTEMLRQFTGNPNIPKPRRILRSAWGSNPYFRGSYSYTQVGSSGADVEKLAKPLPYTESSKTAPMQVLFSGEATHRKYYSTTHGALLSGQREAARLIEMYRDLFQQGP</sequence>
<comment type="function">
    <text>Flavoenzyme which catalyzes the oxidation of spermine to spermidine. Can also use N(1)-acetylspermine and spermidine as substrates, with different affinity depending on the isoform (isozyme) and on the experimental conditions. Plays an important role in the regulation of polyamine intracellular concentration and has the potential to act as a determinant of cellular sensitivity to the antitumor polyamine analogs. May contribute to beta-alanine production via aldehyde dehydrogenase conversion of 3-amino-propanal.</text>
</comment>
<comment type="catalytic activity">
    <reaction evidence="3 4">
        <text>spermine + O2 + H2O = 3-aminopropanal + spermidine + H2O2</text>
        <dbReference type="Rhea" id="RHEA:25804"/>
        <dbReference type="ChEBI" id="CHEBI:15377"/>
        <dbReference type="ChEBI" id="CHEBI:15379"/>
        <dbReference type="ChEBI" id="CHEBI:16240"/>
        <dbReference type="ChEBI" id="CHEBI:45725"/>
        <dbReference type="ChEBI" id="CHEBI:57834"/>
        <dbReference type="ChEBI" id="CHEBI:58374"/>
        <dbReference type="EC" id="1.5.3.16"/>
    </reaction>
</comment>
<comment type="cofactor">
    <cofactor evidence="1">
        <name>FAD</name>
        <dbReference type="ChEBI" id="CHEBI:57692"/>
    </cofactor>
    <text evidence="1">Binds 1 FAD per subunit.</text>
</comment>
<comment type="biophysicochemical properties">
    <kinetics>
        <KM evidence="4">150 uM for spermine</KM>
    </kinetics>
</comment>
<comment type="pathway">
    <text evidence="4">Amine and polyamine degradation; spermine degradation.</text>
</comment>
<comment type="subcellular location">
    <subcellularLocation>
        <location evidence="4">Cytoplasm</location>
    </subcellularLocation>
</comment>
<comment type="subcellular location">
    <molecule>Isoform 2</molecule>
    <subcellularLocation>
        <location>Cytoplasm</location>
    </subcellularLocation>
    <subcellularLocation>
        <location>Nucleus</location>
    </subcellularLocation>
</comment>
<comment type="alternative products">
    <event type="alternative splicing"/>
    <isoform>
        <id>Q99K82-1</id>
        <name>1</name>
        <name>Alpha</name>
        <name>Polyamine oxidase-l</name>
        <sequence type="displayed"/>
    </isoform>
    <isoform>
        <id>Q99K82-2</id>
        <name>2</name>
        <name>Mu</name>
        <sequence type="described" ref="VSP_011137"/>
    </isoform>
    <isoform>
        <id>Q99K82-3</id>
        <name>3</name>
        <name>Eta</name>
        <sequence type="described" ref="VSP_011131"/>
    </isoform>
    <isoform>
        <id>Q99K82-4</id>
        <name>4</name>
        <name>Omega</name>
        <sequence type="described" ref="VSP_011128 VSP_011132"/>
    </isoform>
    <isoform>
        <id>Q99K82-5</id>
        <name>5</name>
        <name>Phi</name>
        <sequence type="described" ref="VSP_011130"/>
    </isoform>
    <isoform>
        <id>Q99K82-6</id>
        <name>6</name>
        <name>Beta</name>
        <sequence type="described" ref="VSP_011136 VSP_011138"/>
    </isoform>
    <isoform>
        <id>Q99K82-7</id>
        <name>7</name>
        <name>Gamma</name>
        <sequence type="described" ref="VSP_011135 VSP_011138"/>
    </isoform>
    <isoform>
        <id>Q99K82-8</id>
        <name>8</name>
        <name>Polyamine oxidase-m</name>
        <sequence type="described" ref="VSP_011134"/>
    </isoform>
    <isoform>
        <id>Q99K82-9</id>
        <name>9</name>
        <name>Polyamine oxidase-s</name>
        <sequence type="described" ref="VSP_011129 VSP_011133"/>
    </isoform>
    <isoform>
        <id>Q99K82-10</id>
        <name>10</name>
        <name>Delta</name>
        <sequence type="described" ref="VSP_011127"/>
    </isoform>
</comment>
<comment type="tissue specificity">
    <text evidence="4">Widely expressed. Isoform 1 and isoform 2 are expressed at higher level in brain and skeletal muscle. Isoform 7 is found in brain and spleen, isoform 10 is widely expressed but found at lower level in heart, kidney, liver and lung.</text>
</comment>
<comment type="induction">
    <text evidence="6">By antitumor polyamine analogs.</text>
</comment>
<comment type="miscellaneous">
    <molecule>Isoform 1</molecule>
    <text>Major isoform.</text>
</comment>
<comment type="miscellaneous">
    <molecule>Isoform 2</molecule>
    <text evidence="6">Active. Nuclear and cytoplasmic.</text>
</comment>
<comment type="miscellaneous">
    <molecule>Isoform 7</molecule>
    <text evidence="6">No detectable activity. Cytoplasmic.</text>
</comment>
<comment type="miscellaneous">
    <molecule>Isoform 10</molecule>
    <text evidence="6">No detectable activity. Cytoplasmic.</text>
</comment>
<comment type="similarity">
    <text evidence="6">Belongs to the flavin monoamine oxidase family.</text>
</comment>
<organism>
    <name type="scientific">Mus musculus</name>
    <name type="common">Mouse</name>
    <dbReference type="NCBI Taxonomy" id="10090"/>
    <lineage>
        <taxon>Eukaryota</taxon>
        <taxon>Metazoa</taxon>
        <taxon>Chordata</taxon>
        <taxon>Craniata</taxon>
        <taxon>Vertebrata</taxon>
        <taxon>Euteleostomi</taxon>
        <taxon>Mammalia</taxon>
        <taxon>Eutheria</taxon>
        <taxon>Euarchontoglires</taxon>
        <taxon>Glires</taxon>
        <taxon>Rodentia</taxon>
        <taxon>Myomorpha</taxon>
        <taxon>Muroidea</taxon>
        <taxon>Muridae</taxon>
        <taxon>Murinae</taxon>
        <taxon>Mus</taxon>
        <taxon>Mus</taxon>
    </lineage>
</organism>
<gene>
    <name type="primary">Smox</name>
    <name type="synonym">Smo</name>
</gene>
<reference key="1">
    <citation type="journal article" date="2004" name="Eur. J. Biochem.">
        <title>Mouse spermine oxidase gene splice variants. Nuclear subcellular localization of a novel active isoform.</title>
        <authorList>
            <person name="Cervelli M."/>
            <person name="Bellini A."/>
            <person name="Bianchi M."/>
            <person name="Marcocci L."/>
            <person name="Nocera S."/>
            <person name="Polticelli F."/>
            <person name="Federico R."/>
            <person name="Amendola R."/>
            <person name="Mariottini P."/>
        </authorList>
    </citation>
    <scope>NUCLEOTIDE SEQUENCE [MRNA] (ISOFORMS 2; 3; 4; 5; 6; 7 AND 10)</scope>
    <scope>CATALYTIC ACTIVITY</scope>
    <scope>BIOPHYSICOCHEMICAL PROPERTIES</scope>
    <scope>PATHWAY</scope>
    <scope>TISSUE SPECIFICITY</scope>
    <scope>SUBCELLULAR LOCATION</scope>
    <source>
        <strain>DBA/2J</strain>
        <tissue>Brain</tissue>
    </source>
</reference>
<reference key="2">
    <citation type="submission" date="2002-04" db="EMBL/GenBank/DDBJ databases">
        <authorList>
            <person name="Wang Y."/>
            <person name="Devereux W."/>
            <person name="Stewart T.M."/>
            <person name="Casero R.A. Jr."/>
        </authorList>
    </citation>
    <scope>NUCLEOTIDE SEQUENCE (ISOFORMS 1; 8 AND 9)</scope>
    <source>
        <tissue>Liver</tissue>
    </source>
</reference>
<reference key="3">
    <citation type="journal article" date="2009" name="PLoS Biol.">
        <title>Lineage-specific biology revealed by a finished genome assembly of the mouse.</title>
        <authorList>
            <person name="Church D.M."/>
            <person name="Goodstadt L."/>
            <person name="Hillier L.W."/>
            <person name="Zody M.C."/>
            <person name="Goldstein S."/>
            <person name="She X."/>
            <person name="Bult C.J."/>
            <person name="Agarwala R."/>
            <person name="Cherry J.L."/>
            <person name="DiCuccio M."/>
            <person name="Hlavina W."/>
            <person name="Kapustin Y."/>
            <person name="Meric P."/>
            <person name="Maglott D."/>
            <person name="Birtle Z."/>
            <person name="Marques A.C."/>
            <person name="Graves T."/>
            <person name="Zhou S."/>
            <person name="Teague B."/>
            <person name="Potamousis K."/>
            <person name="Churas C."/>
            <person name="Place M."/>
            <person name="Herschleb J."/>
            <person name="Runnheim R."/>
            <person name="Forrest D."/>
            <person name="Amos-Landgraf J."/>
            <person name="Schwartz D.C."/>
            <person name="Cheng Z."/>
            <person name="Lindblad-Toh K."/>
            <person name="Eichler E.E."/>
            <person name="Ponting C.P."/>
        </authorList>
    </citation>
    <scope>NUCLEOTIDE SEQUENCE [LARGE SCALE GENOMIC DNA]</scope>
    <source>
        <strain>C57BL/6J</strain>
    </source>
</reference>
<reference key="4">
    <citation type="journal article" date="2004" name="Genome Res.">
        <title>The status, quality, and expansion of the NIH full-length cDNA project: the Mammalian Gene Collection (MGC).</title>
        <authorList>
            <consortium name="The MGC Project Team"/>
        </authorList>
    </citation>
    <scope>NUCLEOTIDE SEQUENCE [LARGE SCALE MRNA] (ISOFORM 1)</scope>
    <source>
        <strain>FVB/N</strain>
        <tissue>Mammary tumor</tissue>
    </source>
</reference>
<reference key="5">
    <citation type="journal article" date="2002" name="Biochem. J.">
        <title>Identification and characterization of a novel flavin-containing spermine oxidase of mammalian cell origin.</title>
        <authorList>
            <person name="Vujcic S."/>
            <person name="Diegelman P."/>
            <person name="Bacchi C.J."/>
            <person name="Kramer D.L."/>
            <person name="Porter C.W."/>
        </authorList>
    </citation>
    <scope>CATALYTIC ACTIVITY</scope>
    <scope>MUTAGENESIS OF CYS-320</scope>
</reference>
<accession>Q99K82</accession>
<accession>A2ANQ8</accession>
<accession>A2ANQ9</accession>
<accession>A2ANR0</accession>
<accession>A2ANR1</accession>
<accession>A2ANR2</accession>
<accession>Q70LA3</accession>
<accession>Q70LA4</accession>
<accession>Q70LA5</accession>
<accession>Q70LA7</accession>
<accession>Q70LA8</accession>
<accession>Q70LA9</accession>
<accession>Q70LB0</accession>
<accession>Q8CJ56</accession>
<accession>Q8CJ57</accession>
<feature type="chain" id="PRO_0000099878" description="Spermine oxidase">
    <location>
        <begin position="1"/>
        <end position="555"/>
    </location>
</feature>
<feature type="region of interest" description="Disordered" evidence="2">
    <location>
        <begin position="271"/>
        <end position="307"/>
    </location>
</feature>
<feature type="compositionally biased region" description="Basic and acidic residues" evidence="2">
    <location>
        <begin position="274"/>
        <end position="291"/>
    </location>
</feature>
<feature type="binding site" evidence="1">
    <location>
        <position position="35"/>
    </location>
    <ligand>
        <name>FAD</name>
        <dbReference type="ChEBI" id="CHEBI:57692"/>
    </ligand>
</feature>
<feature type="binding site" evidence="1">
    <location>
        <position position="55"/>
    </location>
    <ligand>
        <name>FAD</name>
        <dbReference type="ChEBI" id="CHEBI:57692"/>
    </ligand>
</feature>
<feature type="binding site" evidence="1">
    <location>
        <position position="63"/>
    </location>
    <ligand>
        <name>FAD</name>
        <dbReference type="ChEBI" id="CHEBI:57692"/>
    </ligand>
</feature>
<feature type="binding site" evidence="1">
    <location>
        <begin position="79"/>
        <end position="80"/>
    </location>
    <ligand>
        <name>FAD</name>
        <dbReference type="ChEBI" id="CHEBI:57692"/>
    </ligand>
</feature>
<feature type="binding site" evidence="1">
    <location>
        <position position="261"/>
    </location>
    <ligand>
        <name>FAD</name>
        <dbReference type="ChEBI" id="CHEBI:57692"/>
    </ligand>
</feature>
<feature type="binding site" evidence="1">
    <location>
        <position position="519"/>
    </location>
    <ligand>
        <name>FAD</name>
        <dbReference type="ChEBI" id="CHEBI:57692"/>
    </ligand>
</feature>
<feature type="binding site" evidence="1">
    <location>
        <begin position="528"/>
        <end position="529"/>
    </location>
    <ligand>
        <name>FAD</name>
        <dbReference type="ChEBI" id="CHEBI:57692"/>
    </ligand>
</feature>
<feature type="splice variant" id="VSP_011127" description="In isoform 10." evidence="5">
    <location>
        <begin position="146"/>
        <end position="510"/>
    </location>
</feature>
<feature type="splice variant" id="VSP_011130" description="In isoform 5." evidence="5">
    <location>
        <begin position="204"/>
        <end position="510"/>
    </location>
</feature>
<feature type="splice variant" id="VSP_011129" description="In isoform 9." evidence="6">
    <original>VESCESSSHSIDEVSLSAFGEWTEIPGAHHIIPSGFMRVV</original>
    <variation>GTPIYQNLGESCAQPGAATHTSGVPIPTHRWAQVGRMWRS</variation>
    <location>
        <begin position="204"/>
        <end position="243"/>
    </location>
</feature>
<feature type="splice variant" id="VSP_011128" description="In isoform 4." evidence="5">
    <original>VESCES</original>
    <variation>SAMAMC</variation>
    <location>
        <begin position="204"/>
        <end position="209"/>
    </location>
</feature>
<feature type="splice variant" id="VSP_011131" description="In isoform 3." evidence="5">
    <original>ESCESSSHSIDEVSLSAFGEWTEIPGAHHIIPSGFMRVVELLAEGIPPHVIQLGKPVRCIHWDQASAHPRGPEIEPRGEGDHNHDTGEGGQSGENPQQGRWDEDEPWPVVVECEDCEVIPADHVIVTVSLGVLKRQYTSFFRPCLPTEKVAAIHRLGIGTTDKIFLEFEEPFWGPECNSLQFVWEDEAESCTLTYPPELWYRKICGFDVLYPPERYGHVLSGWICGEEALVMERCDDEAVAEICTEMLRQFTGNPNIPKPRRILRSAWGSNPYFRGSYSYTQVGSSGADVEKLAKPLPYTESSKTAPMQVLFSGEATHRKYYSTTHGALLSGQREAARLIEMYRDLFQQGP</original>
    <variation>SLLWSIDARVKKMNSGGVSVQSALLLRALVPCMA</variation>
    <location>
        <begin position="205"/>
        <end position="555"/>
    </location>
</feature>
<feature type="splice variant" id="VSP_011132" description="In isoform 4." evidence="5">
    <location>
        <begin position="210"/>
        <end position="555"/>
    </location>
</feature>
<feature type="splice variant" id="VSP_011133" description="In isoform 9." evidence="6">
    <location>
        <begin position="244"/>
        <end position="255"/>
    </location>
</feature>
<feature type="splice variant" id="VSP_011134" description="In isoform 8." evidence="6">
    <location>
        <begin position="282"/>
        <end position="417"/>
    </location>
</feature>
<feature type="splice variant" id="VSP_011135" description="In isoform 7." evidence="5">
    <original>GNPNIPKPRRILRSAWGSNPYFRGSYSYTQVGSSGADVEKLAKPLPYTESSKTAPM</original>
    <variation>AHAGALLRGGHTP</variation>
    <location>
        <begin position="457"/>
        <end position="512"/>
    </location>
</feature>
<feature type="splice variant" id="VSP_011136" description="In isoform 6." evidence="5">
    <original>NPNIPKPRRILRSAWGSNPYFRGSYSYTQVGSSGADVEKLAKPLPYTESSKTAPM</original>
    <variation>GLKWGGCGEASQAPALHRELQDSAHAGALLRGGHTP</variation>
    <location>
        <begin position="458"/>
        <end position="512"/>
    </location>
</feature>
<feature type="splice variant" id="VSP_011137" description="In isoform 2." evidence="5">
    <original>A</original>
    <variation>AHRSSTEQQPGHLLPSKCPEQSLDPSRGSIK</variation>
    <location>
        <position position="510"/>
    </location>
</feature>
<feature type="splice variant" id="VSP_011138" description="In isoform 6 and isoform 7." evidence="5">
    <original>FSGEATHRKYYSTTHGALLSGQREAARLIEMYRDLFQQGP</original>
    <variation>LHHPRCSALWPARGRPAHRDVPRPLPAGALKGVLTAKCVP</variation>
    <location>
        <begin position="516"/>
        <end position="555"/>
    </location>
</feature>
<feature type="mutagenesis site" description="No change in enzymatic activity." evidence="3">
    <original>C</original>
    <variation>R</variation>
    <location>
        <position position="320"/>
    </location>
</feature>
<protein>
    <recommendedName>
        <fullName>Spermine oxidase</fullName>
        <ecNumber evidence="3 4">1.5.3.16</ecNumber>
    </recommendedName>
    <alternativeName>
        <fullName>Polyamine oxidase 1</fullName>
        <shortName>PAO-1</shortName>
        <shortName>PAOh1</shortName>
    </alternativeName>
</protein>
<dbReference type="EC" id="1.5.3.16" evidence="3 4"/>
<dbReference type="EMBL" id="AJ567473">
    <property type="protein sequence ID" value="CAD98866.1"/>
    <property type="molecule type" value="mRNA"/>
</dbReference>
<dbReference type="EMBL" id="AJ567474">
    <property type="protein sequence ID" value="CAD98867.1"/>
    <property type="molecule type" value="mRNA"/>
</dbReference>
<dbReference type="EMBL" id="AJ567475">
    <property type="protein sequence ID" value="CAD98868.1"/>
    <property type="molecule type" value="mRNA"/>
</dbReference>
<dbReference type="EMBL" id="AJ567476">
    <property type="protein sequence ID" value="CAD98869.1"/>
    <property type="molecule type" value="mRNA"/>
</dbReference>
<dbReference type="EMBL" id="AJ567477">
    <property type="protein sequence ID" value="CAD98870.1"/>
    <property type="molecule type" value="mRNA"/>
</dbReference>
<dbReference type="EMBL" id="AJ567478">
    <property type="protein sequence ID" value="CAD98871.1"/>
    <property type="molecule type" value="mRNA"/>
</dbReference>
<dbReference type="EMBL" id="AJ567479">
    <property type="protein sequence ID" value="CAD98872.1"/>
    <property type="molecule type" value="mRNA"/>
</dbReference>
<dbReference type="EMBL" id="AJ567480">
    <property type="protein sequence ID" value="CAD98873.1"/>
    <property type="molecule type" value="mRNA"/>
</dbReference>
<dbReference type="EMBL" id="AF495851">
    <property type="protein sequence ID" value="AAN32908.1"/>
    <property type="molecule type" value="mRNA"/>
</dbReference>
<dbReference type="EMBL" id="AF495852">
    <property type="protein sequence ID" value="AAN32909.1"/>
    <property type="molecule type" value="mRNA"/>
</dbReference>
<dbReference type="EMBL" id="AF495853">
    <property type="protein sequence ID" value="AAN32910.1"/>
    <property type="molecule type" value="mRNA"/>
</dbReference>
<dbReference type="EMBL" id="AF498364">
    <property type="protein sequence ID" value="AAN32915.1"/>
    <property type="molecule type" value="Genomic_DNA"/>
</dbReference>
<dbReference type="EMBL" id="AL831731">
    <property type="status" value="NOT_ANNOTATED_CDS"/>
    <property type="molecule type" value="Genomic_DNA"/>
</dbReference>
<dbReference type="EMBL" id="AL831781">
    <property type="status" value="NOT_ANNOTATED_CDS"/>
    <property type="molecule type" value="Genomic_DNA"/>
</dbReference>
<dbReference type="EMBL" id="BC004831">
    <property type="protein sequence ID" value="AAH04831.1"/>
    <property type="molecule type" value="mRNA"/>
</dbReference>
<dbReference type="CCDS" id="CCDS16763.1">
    <molecule id="Q99K82-1"/>
</dbReference>
<dbReference type="CCDS" id="CCDS50718.1">
    <molecule id="Q99K82-8"/>
</dbReference>
<dbReference type="CCDS" id="CCDS50719.1">
    <molecule id="Q99K82-2"/>
</dbReference>
<dbReference type="CCDS" id="CCDS50720.1">
    <molecule id="Q99K82-6"/>
</dbReference>
<dbReference type="CCDS" id="CCDS50721.1">
    <molecule id="Q99K82-7"/>
</dbReference>
<dbReference type="CCDS" id="CCDS50724.1">
    <molecule id="Q99K82-5"/>
</dbReference>
<dbReference type="CCDS" id="CCDS50725.1">
    <molecule id="Q99K82-10"/>
</dbReference>
<dbReference type="RefSeq" id="NP_001171304.1">
    <molecule id="Q99K82-2"/>
    <property type="nucleotide sequence ID" value="NM_001177833.2"/>
</dbReference>
<dbReference type="RefSeq" id="NP_001171305.1">
    <molecule id="Q99K82-6"/>
    <property type="nucleotide sequence ID" value="NM_001177834.2"/>
</dbReference>
<dbReference type="RefSeq" id="NP_001171306.1">
    <molecule id="Q99K82-7"/>
    <property type="nucleotide sequence ID" value="NM_001177835.2"/>
</dbReference>
<dbReference type="RefSeq" id="NP_001171307.1">
    <molecule id="Q99K82-8"/>
    <property type="nucleotide sequence ID" value="NM_001177836.2"/>
</dbReference>
<dbReference type="RefSeq" id="NP_001171309.1">
    <molecule id="Q99K82-5"/>
    <property type="nucleotide sequence ID" value="NM_001177838.2"/>
</dbReference>
<dbReference type="RefSeq" id="NP_001171310.1">
    <property type="nucleotide sequence ID" value="NM_001177839.1"/>
</dbReference>
<dbReference type="RefSeq" id="NP_001171311.1">
    <molecule id="Q99K82-10"/>
    <property type="nucleotide sequence ID" value="NM_001177840.2"/>
</dbReference>
<dbReference type="RefSeq" id="NP_663508.1">
    <molecule id="Q99K82-1"/>
    <property type="nucleotide sequence ID" value="NM_145533.3"/>
</dbReference>
<dbReference type="RefSeq" id="XP_006499350.1">
    <molecule id="Q99K82-2"/>
    <property type="nucleotide sequence ID" value="XM_006499287.4"/>
</dbReference>
<dbReference type="RefSeq" id="XP_006499351.1">
    <molecule id="Q99K82-2"/>
    <property type="nucleotide sequence ID" value="XM_006499288.3"/>
</dbReference>
<dbReference type="RefSeq" id="XP_030106328.1">
    <molecule id="Q99K82-1"/>
    <property type="nucleotide sequence ID" value="XM_030250468.1"/>
</dbReference>
<dbReference type="RefSeq" id="XP_030106330.1">
    <molecule id="Q99K82-1"/>
    <property type="nucleotide sequence ID" value="XM_030250470.1"/>
</dbReference>
<dbReference type="RefSeq" id="XP_030106332.1">
    <molecule id="Q99K82-1"/>
    <property type="nucleotide sequence ID" value="XM_030250472.2"/>
</dbReference>
<dbReference type="RefSeq" id="XP_030106346.1">
    <molecule id="Q99K82-7"/>
    <property type="nucleotide sequence ID" value="XM_030250486.1"/>
</dbReference>
<dbReference type="RefSeq" id="XP_030106358.1">
    <molecule id="Q99K82-8"/>
    <property type="nucleotide sequence ID" value="XM_030250498.1"/>
</dbReference>
<dbReference type="RefSeq" id="XP_036017254.1">
    <molecule id="Q99K82-2"/>
    <property type="nucleotide sequence ID" value="XM_036161361.1"/>
</dbReference>
<dbReference type="RefSeq" id="XP_036017255.1">
    <molecule id="Q99K82-2"/>
    <property type="nucleotide sequence ID" value="XM_036161362.1"/>
</dbReference>
<dbReference type="RefSeq" id="XP_036017256.1">
    <molecule id="Q99K82-2"/>
    <property type="nucleotide sequence ID" value="XM_036161363.1"/>
</dbReference>
<dbReference type="RefSeq" id="XP_036017258.1">
    <molecule id="Q99K82-2"/>
    <property type="nucleotide sequence ID" value="XM_036161365.1"/>
</dbReference>
<dbReference type="RefSeq" id="XP_036017261.1">
    <molecule id="Q99K82-1"/>
    <property type="nucleotide sequence ID" value="XM_036161368.1"/>
</dbReference>
<dbReference type="RefSeq" id="XP_036017262.1">
    <molecule id="Q99K82-1"/>
    <property type="nucleotide sequence ID" value="XM_036161369.1"/>
</dbReference>
<dbReference type="RefSeq" id="XP_036017263.1">
    <molecule id="Q99K82-1"/>
    <property type="nucleotide sequence ID" value="XM_036161370.1"/>
</dbReference>
<dbReference type="RefSeq" id="XP_036017264.1">
    <molecule id="Q99K82-1"/>
    <property type="nucleotide sequence ID" value="XM_036161371.1"/>
</dbReference>
<dbReference type="RefSeq" id="XP_036017276.1">
    <molecule id="Q99K82-8"/>
    <property type="nucleotide sequence ID" value="XM_036161383.1"/>
</dbReference>
<dbReference type="SMR" id="Q99K82"/>
<dbReference type="BioGRID" id="230749">
    <property type="interactions" value="1"/>
</dbReference>
<dbReference type="FunCoup" id="Q99K82">
    <property type="interactions" value="2439"/>
</dbReference>
<dbReference type="STRING" id="10090.ENSMUSP00000105815"/>
<dbReference type="iPTMnet" id="Q99K82"/>
<dbReference type="PhosphoSitePlus" id="Q99K82"/>
<dbReference type="CPTAC" id="non-CPTAC-3385"/>
<dbReference type="jPOST" id="Q99K82"/>
<dbReference type="PaxDb" id="10090-ENSMUSP00000105815"/>
<dbReference type="ProteomicsDB" id="261445">
    <molecule id="Q99K82-1"/>
</dbReference>
<dbReference type="ProteomicsDB" id="261446">
    <molecule id="Q99K82-2"/>
</dbReference>
<dbReference type="ProteomicsDB" id="261447">
    <molecule id="Q99K82-3"/>
</dbReference>
<dbReference type="ProteomicsDB" id="261448">
    <molecule id="Q99K82-4"/>
</dbReference>
<dbReference type="ProteomicsDB" id="261449">
    <molecule id="Q99K82-5"/>
</dbReference>
<dbReference type="ProteomicsDB" id="261450">
    <molecule id="Q99K82-6"/>
</dbReference>
<dbReference type="ProteomicsDB" id="261451">
    <molecule id="Q99K82-7"/>
</dbReference>
<dbReference type="ProteomicsDB" id="261452">
    <molecule id="Q99K82-8"/>
</dbReference>
<dbReference type="ProteomicsDB" id="261453">
    <molecule id="Q99K82-9"/>
</dbReference>
<dbReference type="ProteomicsDB" id="261454">
    <molecule id="Q99K82-10"/>
</dbReference>
<dbReference type="Pumba" id="Q99K82"/>
<dbReference type="Antibodypedia" id="23782">
    <property type="antibodies" value="119 antibodies from 20 providers"/>
</dbReference>
<dbReference type="DNASU" id="228608"/>
<dbReference type="Ensembl" id="ENSMUST00000028806.12">
    <molecule id="Q99K82-1"/>
    <property type="protein sequence ID" value="ENSMUSP00000028806.6"/>
    <property type="gene ID" value="ENSMUSG00000027333.19"/>
</dbReference>
<dbReference type="Ensembl" id="ENSMUST00000110180.2">
    <molecule id="Q99K82-8"/>
    <property type="protein sequence ID" value="ENSMUSP00000105809.2"/>
    <property type="gene ID" value="ENSMUSG00000027333.19"/>
</dbReference>
<dbReference type="Ensembl" id="ENSMUST00000110182.9">
    <molecule id="Q99K82-10"/>
    <property type="protein sequence ID" value="ENSMUSP00000105811.3"/>
    <property type="gene ID" value="ENSMUSG00000027333.19"/>
</dbReference>
<dbReference type="Ensembl" id="ENSMUST00000110183.9">
    <molecule id="Q99K82-5"/>
    <property type="protein sequence ID" value="ENSMUSP00000105812.3"/>
    <property type="gene ID" value="ENSMUSG00000027333.19"/>
</dbReference>
<dbReference type="Ensembl" id="ENSMUST00000110186.9">
    <molecule id="Q99K82-2"/>
    <property type="protein sequence ID" value="ENSMUSP00000105815.3"/>
    <property type="gene ID" value="ENSMUSG00000027333.19"/>
</dbReference>
<dbReference type="Ensembl" id="ENSMUST00000110188.8">
    <molecule id="Q99K82-6"/>
    <property type="protein sequence ID" value="ENSMUSP00000105817.2"/>
    <property type="gene ID" value="ENSMUSG00000027333.19"/>
</dbReference>
<dbReference type="Ensembl" id="ENSMUST00000110189.9">
    <molecule id="Q99K82-7"/>
    <property type="protein sequence ID" value="ENSMUSP00000105818.3"/>
    <property type="gene ID" value="ENSMUSG00000027333.19"/>
</dbReference>
<dbReference type="Ensembl" id="ENSMUST00000183947.8">
    <molecule id="Q99K82-4"/>
    <property type="protein sequence ID" value="ENSMUSP00000139278.2"/>
    <property type="gene ID" value="ENSMUSG00000027333.19"/>
</dbReference>
<dbReference type="GeneID" id="228608"/>
<dbReference type="KEGG" id="mmu:228608"/>
<dbReference type="UCSC" id="uc008mlm.2">
    <molecule id="Q99K82-1"/>
    <property type="organism name" value="mouse"/>
</dbReference>
<dbReference type="UCSC" id="uc008mln.2">
    <molecule id="Q99K82-2"/>
    <property type="organism name" value="mouse"/>
</dbReference>
<dbReference type="UCSC" id="uc008mlp.2">
    <molecule id="Q99K82-8"/>
    <property type="organism name" value="mouse"/>
</dbReference>
<dbReference type="UCSC" id="uc008mls.2">
    <molecule id="Q99K82-10"/>
    <property type="organism name" value="mouse"/>
</dbReference>
<dbReference type="UCSC" id="uc008mlt.2">
    <molecule id="Q99K82-6"/>
    <property type="organism name" value="mouse"/>
</dbReference>
<dbReference type="UCSC" id="uc012cep.1">
    <molecule id="Q99K82-7"/>
    <property type="organism name" value="mouse"/>
</dbReference>
<dbReference type="UCSC" id="uc012ceq.1">
    <molecule id="Q99K82-5"/>
    <property type="organism name" value="mouse"/>
</dbReference>
<dbReference type="AGR" id="MGI:2445356"/>
<dbReference type="CTD" id="54498"/>
<dbReference type="MGI" id="MGI:2445356">
    <property type="gene designation" value="Smox"/>
</dbReference>
<dbReference type="VEuPathDB" id="HostDB:ENSMUSG00000027333"/>
<dbReference type="eggNOG" id="KOG0685">
    <property type="taxonomic scope" value="Eukaryota"/>
</dbReference>
<dbReference type="GeneTree" id="ENSGT00940000157511"/>
<dbReference type="HOGENOM" id="CLU_097972_0_0_1"/>
<dbReference type="InParanoid" id="Q99K82"/>
<dbReference type="OMA" id="CITGCHS"/>
<dbReference type="PhylomeDB" id="Q99K82"/>
<dbReference type="TreeFam" id="TF318348"/>
<dbReference type="BRENDA" id="1.5.3.16">
    <property type="organism ID" value="3474"/>
</dbReference>
<dbReference type="Reactome" id="R-MMU-141334">
    <property type="pathway name" value="PAOs oxidise polyamines to amines"/>
</dbReference>
<dbReference type="Reactome" id="R-MMU-351200">
    <property type="pathway name" value="Interconversion of polyamines"/>
</dbReference>
<dbReference type="UniPathway" id="UPA00211"/>
<dbReference type="BioGRID-ORCS" id="228608">
    <property type="hits" value="3 hits in 79 CRISPR screens"/>
</dbReference>
<dbReference type="ChiTaRS" id="Smox">
    <property type="organism name" value="mouse"/>
</dbReference>
<dbReference type="PRO" id="PR:Q99K82"/>
<dbReference type="Proteomes" id="UP000000589">
    <property type="component" value="Chromosome 2"/>
</dbReference>
<dbReference type="RNAct" id="Q99K82">
    <property type="molecule type" value="protein"/>
</dbReference>
<dbReference type="Bgee" id="ENSMUSG00000027333">
    <property type="expression patterns" value="Expressed in triceps brachii and 242 other cell types or tissues"/>
</dbReference>
<dbReference type="ExpressionAtlas" id="Q99K82">
    <property type="expression patterns" value="baseline and differential"/>
</dbReference>
<dbReference type="GO" id="GO:0005829">
    <property type="term" value="C:cytosol"/>
    <property type="evidence" value="ECO:0007669"/>
    <property type="project" value="Ensembl"/>
</dbReference>
<dbReference type="GO" id="GO:0031965">
    <property type="term" value="C:nuclear membrane"/>
    <property type="evidence" value="ECO:0007669"/>
    <property type="project" value="Ensembl"/>
</dbReference>
<dbReference type="GO" id="GO:0005654">
    <property type="term" value="C:nucleoplasm"/>
    <property type="evidence" value="ECO:0007669"/>
    <property type="project" value="Ensembl"/>
</dbReference>
<dbReference type="GO" id="GO:0046592">
    <property type="term" value="F:polyamine oxidase activity"/>
    <property type="evidence" value="ECO:0000314"/>
    <property type="project" value="MGI"/>
</dbReference>
<dbReference type="GO" id="GO:0052901">
    <property type="term" value="F:spermine oxidase activity"/>
    <property type="evidence" value="ECO:0007669"/>
    <property type="project" value="UniProtKB-EC"/>
</dbReference>
<dbReference type="GO" id="GO:0046208">
    <property type="term" value="P:spermine catabolic process"/>
    <property type="evidence" value="ECO:0000314"/>
    <property type="project" value="MGI"/>
</dbReference>
<dbReference type="FunFam" id="3.50.50.60:FF:000448">
    <property type="entry name" value="Putative polyamine oxidase 5 isoform A"/>
    <property type="match status" value="1"/>
</dbReference>
<dbReference type="FunFam" id="3.50.50.60:FF:000268">
    <property type="entry name" value="spermine oxidase isoform X2"/>
    <property type="match status" value="1"/>
</dbReference>
<dbReference type="FunFam" id="3.90.660.10:FF:000003">
    <property type="entry name" value="spermine oxidase isoform X2"/>
    <property type="match status" value="1"/>
</dbReference>
<dbReference type="FunFam" id="3.90.660.10:FF:000004">
    <property type="entry name" value="spermine oxidase isoform X2"/>
    <property type="match status" value="1"/>
</dbReference>
<dbReference type="Gene3D" id="3.90.660.10">
    <property type="match status" value="1"/>
</dbReference>
<dbReference type="Gene3D" id="3.50.50.60">
    <property type="entry name" value="FAD/NAD(P)-binding domain"/>
    <property type="match status" value="2"/>
</dbReference>
<dbReference type="InterPro" id="IPR002937">
    <property type="entry name" value="Amino_oxidase"/>
</dbReference>
<dbReference type="InterPro" id="IPR036188">
    <property type="entry name" value="FAD/NAD-bd_sf"/>
</dbReference>
<dbReference type="InterPro" id="IPR050281">
    <property type="entry name" value="Flavin_monoamine_oxidase"/>
</dbReference>
<dbReference type="PANTHER" id="PTHR10742">
    <property type="entry name" value="FLAVIN MONOAMINE OXIDASE"/>
    <property type="match status" value="1"/>
</dbReference>
<dbReference type="PANTHER" id="PTHR10742:SF416">
    <property type="entry name" value="SPERMINE OXIDASE"/>
    <property type="match status" value="1"/>
</dbReference>
<dbReference type="Pfam" id="PF01593">
    <property type="entry name" value="Amino_oxidase"/>
    <property type="match status" value="2"/>
</dbReference>
<dbReference type="SUPFAM" id="SSF54373">
    <property type="entry name" value="FAD-linked reductases, C-terminal domain"/>
    <property type="match status" value="1"/>
</dbReference>
<dbReference type="SUPFAM" id="SSF51905">
    <property type="entry name" value="FAD/NAD(P)-binding domain"/>
    <property type="match status" value="1"/>
</dbReference>
<name>SMOX_MOUSE</name>
<evidence type="ECO:0000250" key="1">
    <source>
        <dbReference type="UniProtKB" id="Q8C0L6"/>
    </source>
</evidence>
<evidence type="ECO:0000256" key="2">
    <source>
        <dbReference type="SAM" id="MobiDB-lite"/>
    </source>
</evidence>
<evidence type="ECO:0000269" key="3">
    <source>
    </source>
</evidence>
<evidence type="ECO:0000269" key="4">
    <source>
    </source>
</evidence>
<evidence type="ECO:0000303" key="5">
    <source>
    </source>
</evidence>
<evidence type="ECO:0000305" key="6"/>
<proteinExistence type="evidence at protein level"/>
<keyword id="KW-0025">Alternative splicing</keyword>
<keyword id="KW-0963">Cytoplasm</keyword>
<keyword id="KW-0274">FAD</keyword>
<keyword id="KW-0285">Flavoprotein</keyword>
<keyword id="KW-0539">Nucleus</keyword>
<keyword id="KW-0560">Oxidoreductase</keyword>
<keyword id="KW-1185">Reference proteome</keyword>